<reference key="1">
    <citation type="journal article" date="2000" name="Nature">
        <title>The complete sequence of the mucosal pathogen Ureaplasma urealyticum.</title>
        <authorList>
            <person name="Glass J.I."/>
            <person name="Lefkowitz E.J."/>
            <person name="Glass J.S."/>
            <person name="Heiner C.R."/>
            <person name="Chen E.Y."/>
            <person name="Cassell G.H."/>
        </authorList>
    </citation>
    <scope>NUCLEOTIDE SEQUENCE [LARGE SCALE GENOMIC DNA]</scope>
    <source>
        <strain>ATCC 700970</strain>
    </source>
</reference>
<dbReference type="EMBL" id="AF222894">
    <property type="protein sequence ID" value="AAF30827.1"/>
    <property type="molecule type" value="Genomic_DNA"/>
</dbReference>
<dbReference type="RefSeq" id="WP_006688799.1">
    <property type="nucleotide sequence ID" value="NC_002162.1"/>
</dbReference>
<dbReference type="SMR" id="Q9PQ73"/>
<dbReference type="STRING" id="273119.UU416"/>
<dbReference type="EnsemblBacteria" id="AAF30827">
    <property type="protein sequence ID" value="AAF30827"/>
    <property type="gene ID" value="UU416"/>
</dbReference>
<dbReference type="GeneID" id="29672561"/>
<dbReference type="KEGG" id="uur:UU416"/>
<dbReference type="HOGENOM" id="CLU_2756672_0_0_14"/>
<dbReference type="OrthoDB" id="9919329at2"/>
<dbReference type="Proteomes" id="UP000000423">
    <property type="component" value="Chromosome"/>
</dbReference>
<keyword id="KW-1185">Reference proteome</keyword>
<protein>
    <recommendedName>
        <fullName>Uncharacterized protein UU416</fullName>
    </recommendedName>
</protein>
<name>Y416_UREPA</name>
<evidence type="ECO:0000305" key="1"/>
<gene>
    <name type="ordered locus">UU416</name>
</gene>
<comment type="similarity">
    <text evidence="1">To M.pneumoniae MPN377.</text>
</comment>
<proteinExistence type="predicted"/>
<accession>Q9PQ73</accession>
<sequence>MSDKKSDFEKLFERSKVQETSIFDINDIDEQKPYEEHSIEELSYILEYEKIDKKTREKIKKIIKEKQQNL</sequence>
<feature type="chain" id="PRO_0000210671" description="Uncharacterized protein UU416">
    <location>
        <begin position="1"/>
        <end position="70"/>
    </location>
</feature>
<organism>
    <name type="scientific">Ureaplasma parvum serovar 3 (strain ATCC 700970)</name>
    <dbReference type="NCBI Taxonomy" id="273119"/>
    <lineage>
        <taxon>Bacteria</taxon>
        <taxon>Bacillati</taxon>
        <taxon>Mycoplasmatota</taxon>
        <taxon>Mycoplasmoidales</taxon>
        <taxon>Mycoplasmoidaceae</taxon>
        <taxon>Ureaplasma</taxon>
    </lineage>
</organism>